<comment type="function">
    <text evidence="1">Binds directly to 16S ribosomal RNA.</text>
</comment>
<comment type="similarity">
    <text evidence="1">Belongs to the bacterial ribosomal protein bS20 family.</text>
</comment>
<reference key="1">
    <citation type="journal article" date="2008" name="J. Bacteriol.">
        <title>The complete genome sequence of Escherichia coli DH10B: insights into the biology of a laboratory workhorse.</title>
        <authorList>
            <person name="Durfee T."/>
            <person name="Nelson R."/>
            <person name="Baldwin S."/>
            <person name="Plunkett G. III"/>
            <person name="Burland V."/>
            <person name="Mau B."/>
            <person name="Petrosino J.F."/>
            <person name="Qin X."/>
            <person name="Muzny D.M."/>
            <person name="Ayele M."/>
            <person name="Gibbs R.A."/>
            <person name="Csorgo B."/>
            <person name="Posfai G."/>
            <person name="Weinstock G.M."/>
            <person name="Blattner F.R."/>
        </authorList>
    </citation>
    <scope>NUCLEOTIDE SEQUENCE [LARGE SCALE GENOMIC DNA]</scope>
    <source>
        <strain>K12 / DH10B</strain>
    </source>
</reference>
<gene>
    <name evidence="1" type="primary">rpsT</name>
    <name type="ordered locus">ECDH10B_0024</name>
</gene>
<sequence>MANIKSAKKRAIQSEKARKHNASRRSMMRTFIKKVYAAIEAGDKAAAQKAFNEMQPIVDRQAAKGLIHKNKAARHKANLTAQINKLA</sequence>
<feature type="chain" id="PRO_1000126442" description="Small ribosomal subunit protein bS20">
    <location>
        <begin position="1"/>
        <end position="87"/>
    </location>
</feature>
<feature type="region of interest" description="Disordered" evidence="2">
    <location>
        <begin position="1"/>
        <end position="26"/>
    </location>
</feature>
<protein>
    <recommendedName>
        <fullName evidence="1">Small ribosomal subunit protein bS20</fullName>
    </recommendedName>
    <alternativeName>
        <fullName evidence="3">30S ribosomal protein S20</fullName>
    </alternativeName>
</protein>
<evidence type="ECO:0000255" key="1">
    <source>
        <dbReference type="HAMAP-Rule" id="MF_00500"/>
    </source>
</evidence>
<evidence type="ECO:0000256" key="2">
    <source>
        <dbReference type="SAM" id="MobiDB-lite"/>
    </source>
</evidence>
<evidence type="ECO:0000305" key="3"/>
<accession>B1XBE8</accession>
<name>RS20_ECODH</name>
<proteinExistence type="inferred from homology"/>
<keyword id="KW-0687">Ribonucleoprotein</keyword>
<keyword id="KW-0689">Ribosomal protein</keyword>
<keyword id="KW-0694">RNA-binding</keyword>
<keyword id="KW-0699">rRNA-binding</keyword>
<organism>
    <name type="scientific">Escherichia coli (strain K12 / DH10B)</name>
    <dbReference type="NCBI Taxonomy" id="316385"/>
    <lineage>
        <taxon>Bacteria</taxon>
        <taxon>Pseudomonadati</taxon>
        <taxon>Pseudomonadota</taxon>
        <taxon>Gammaproteobacteria</taxon>
        <taxon>Enterobacterales</taxon>
        <taxon>Enterobacteriaceae</taxon>
        <taxon>Escherichia</taxon>
    </lineage>
</organism>
<dbReference type="EMBL" id="CP000948">
    <property type="protein sequence ID" value="ACB01228.1"/>
    <property type="molecule type" value="Genomic_DNA"/>
</dbReference>
<dbReference type="RefSeq" id="WP_001274021.1">
    <property type="nucleotide sequence ID" value="NC_010473.1"/>
</dbReference>
<dbReference type="SMR" id="B1XBE8"/>
<dbReference type="GeneID" id="93777413"/>
<dbReference type="KEGG" id="ecd:ECDH10B_0024"/>
<dbReference type="HOGENOM" id="CLU_160655_4_0_6"/>
<dbReference type="GO" id="GO:0005829">
    <property type="term" value="C:cytosol"/>
    <property type="evidence" value="ECO:0007669"/>
    <property type="project" value="TreeGrafter"/>
</dbReference>
<dbReference type="GO" id="GO:0015935">
    <property type="term" value="C:small ribosomal subunit"/>
    <property type="evidence" value="ECO:0007669"/>
    <property type="project" value="TreeGrafter"/>
</dbReference>
<dbReference type="GO" id="GO:0070181">
    <property type="term" value="F:small ribosomal subunit rRNA binding"/>
    <property type="evidence" value="ECO:0007669"/>
    <property type="project" value="TreeGrafter"/>
</dbReference>
<dbReference type="GO" id="GO:0003735">
    <property type="term" value="F:structural constituent of ribosome"/>
    <property type="evidence" value="ECO:0007669"/>
    <property type="project" value="InterPro"/>
</dbReference>
<dbReference type="GO" id="GO:0006412">
    <property type="term" value="P:translation"/>
    <property type="evidence" value="ECO:0007669"/>
    <property type="project" value="UniProtKB-UniRule"/>
</dbReference>
<dbReference type="FunFam" id="1.20.58.110:FF:000001">
    <property type="entry name" value="30S ribosomal protein S20"/>
    <property type="match status" value="1"/>
</dbReference>
<dbReference type="Gene3D" id="1.20.58.110">
    <property type="entry name" value="Ribosomal protein S20"/>
    <property type="match status" value="1"/>
</dbReference>
<dbReference type="HAMAP" id="MF_00500">
    <property type="entry name" value="Ribosomal_bS20"/>
    <property type="match status" value="1"/>
</dbReference>
<dbReference type="InterPro" id="IPR002583">
    <property type="entry name" value="Ribosomal_bS20"/>
</dbReference>
<dbReference type="InterPro" id="IPR036510">
    <property type="entry name" value="Ribosomal_bS20_sf"/>
</dbReference>
<dbReference type="NCBIfam" id="TIGR00029">
    <property type="entry name" value="S20"/>
    <property type="match status" value="1"/>
</dbReference>
<dbReference type="PANTHER" id="PTHR33398">
    <property type="entry name" value="30S RIBOSOMAL PROTEIN S20"/>
    <property type="match status" value="1"/>
</dbReference>
<dbReference type="PANTHER" id="PTHR33398:SF1">
    <property type="entry name" value="SMALL RIBOSOMAL SUBUNIT PROTEIN BS20C"/>
    <property type="match status" value="1"/>
</dbReference>
<dbReference type="Pfam" id="PF01649">
    <property type="entry name" value="Ribosomal_S20p"/>
    <property type="match status" value="1"/>
</dbReference>
<dbReference type="SUPFAM" id="SSF46992">
    <property type="entry name" value="Ribosomal protein S20"/>
    <property type="match status" value="1"/>
</dbReference>